<reference key="1">
    <citation type="journal article" date="2012" name="BMC Genomics">
        <title>Comparative genomics and transcriptomics of lineages I, II, and III strains of Listeria monocytogenes.</title>
        <authorList>
            <person name="Hain T."/>
            <person name="Ghai R."/>
            <person name="Billion A."/>
            <person name="Kuenne C.T."/>
            <person name="Steinweg C."/>
            <person name="Izar B."/>
            <person name="Mohamed W."/>
            <person name="Mraheil M."/>
            <person name="Domann E."/>
            <person name="Schaffrath S."/>
            <person name="Karst U."/>
            <person name="Goesmann A."/>
            <person name="Oehm S."/>
            <person name="Puhler A."/>
            <person name="Merkl R."/>
            <person name="Vorwerk S."/>
            <person name="Glaser P."/>
            <person name="Garrido P."/>
            <person name="Rusniok C."/>
            <person name="Buchrieser C."/>
            <person name="Goebel W."/>
            <person name="Chakraborty T."/>
        </authorList>
    </citation>
    <scope>NUCLEOTIDE SEQUENCE [LARGE SCALE GENOMIC DNA]</scope>
    <source>
        <strain>CLIP80459</strain>
    </source>
</reference>
<feature type="chain" id="PRO_1000205133" description="Probable GTP-binding protein EngB">
    <location>
        <begin position="1"/>
        <end position="194"/>
    </location>
</feature>
<feature type="domain" description="EngB-type G" evidence="1">
    <location>
        <begin position="22"/>
        <end position="194"/>
    </location>
</feature>
<feature type="binding site" evidence="1">
    <location>
        <begin position="30"/>
        <end position="37"/>
    </location>
    <ligand>
        <name>GTP</name>
        <dbReference type="ChEBI" id="CHEBI:37565"/>
    </ligand>
</feature>
<feature type="binding site" evidence="1">
    <location>
        <position position="37"/>
    </location>
    <ligand>
        <name>Mg(2+)</name>
        <dbReference type="ChEBI" id="CHEBI:18420"/>
    </ligand>
</feature>
<feature type="binding site" evidence="1">
    <location>
        <begin position="57"/>
        <end position="61"/>
    </location>
    <ligand>
        <name>GTP</name>
        <dbReference type="ChEBI" id="CHEBI:37565"/>
    </ligand>
</feature>
<feature type="binding site" evidence="1">
    <location>
        <position position="59"/>
    </location>
    <ligand>
        <name>Mg(2+)</name>
        <dbReference type="ChEBI" id="CHEBI:18420"/>
    </ligand>
</feature>
<feature type="binding site" evidence="1">
    <location>
        <begin position="75"/>
        <end position="78"/>
    </location>
    <ligand>
        <name>GTP</name>
        <dbReference type="ChEBI" id="CHEBI:37565"/>
    </ligand>
</feature>
<feature type="binding site" evidence="1">
    <location>
        <begin position="142"/>
        <end position="145"/>
    </location>
    <ligand>
        <name>GTP</name>
        <dbReference type="ChEBI" id="CHEBI:37565"/>
    </ligand>
</feature>
<feature type="binding site" evidence="1">
    <location>
        <begin position="174"/>
        <end position="176"/>
    </location>
    <ligand>
        <name>GTP</name>
        <dbReference type="ChEBI" id="CHEBI:37565"/>
    </ligand>
</feature>
<proteinExistence type="inferred from homology"/>
<keyword id="KW-0131">Cell cycle</keyword>
<keyword id="KW-0132">Cell division</keyword>
<keyword id="KW-0342">GTP-binding</keyword>
<keyword id="KW-0460">Magnesium</keyword>
<keyword id="KW-0479">Metal-binding</keyword>
<keyword id="KW-0547">Nucleotide-binding</keyword>
<keyword id="KW-0717">Septation</keyword>
<gene>
    <name evidence="1" type="primary">engB</name>
    <name type="ordered locus">Lm4b_01569</name>
</gene>
<name>ENGB_LISMC</name>
<comment type="function">
    <text evidence="1">Necessary for normal cell division and for the maintenance of normal septation.</text>
</comment>
<comment type="cofactor">
    <cofactor evidence="1">
        <name>Mg(2+)</name>
        <dbReference type="ChEBI" id="CHEBI:18420"/>
    </cofactor>
</comment>
<comment type="similarity">
    <text evidence="1">Belongs to the TRAFAC class TrmE-Era-EngA-EngB-Septin-like GTPase superfamily. EngB GTPase family.</text>
</comment>
<sequence length="194" mass="22607">MDVNNVELIISAVRPEQYPETDLPEYALAGRSNVGKSSFINTMIRRKSMARISQKPGKTQTLNFYKIEEALFFVDVPGYGFAKVSKTEREKWGVMIETYITSREQLRGVIQIVDLRHKPTEDDRMMYEFLKYYDIPVIVVATKADKIPRSKWQKNAKIVRETLDFDPDDKFVLFSSETKMGKDEAWQFIKEGME</sequence>
<protein>
    <recommendedName>
        <fullName evidence="1">Probable GTP-binding protein EngB</fullName>
    </recommendedName>
</protein>
<evidence type="ECO:0000255" key="1">
    <source>
        <dbReference type="HAMAP-Rule" id="MF_00321"/>
    </source>
</evidence>
<accession>C1KVK5</accession>
<organism>
    <name type="scientific">Listeria monocytogenes serotype 4b (strain CLIP80459)</name>
    <dbReference type="NCBI Taxonomy" id="568819"/>
    <lineage>
        <taxon>Bacteria</taxon>
        <taxon>Bacillati</taxon>
        <taxon>Bacillota</taxon>
        <taxon>Bacilli</taxon>
        <taxon>Bacillales</taxon>
        <taxon>Listeriaceae</taxon>
        <taxon>Listeria</taxon>
    </lineage>
</organism>
<dbReference type="EMBL" id="FM242711">
    <property type="protein sequence ID" value="CAS05330.1"/>
    <property type="molecule type" value="Genomic_DNA"/>
</dbReference>
<dbReference type="SMR" id="C1KVK5"/>
<dbReference type="KEGG" id="lmc:Lm4b_01569"/>
<dbReference type="HOGENOM" id="CLU_033732_3_0_9"/>
<dbReference type="GO" id="GO:0005829">
    <property type="term" value="C:cytosol"/>
    <property type="evidence" value="ECO:0007669"/>
    <property type="project" value="TreeGrafter"/>
</dbReference>
<dbReference type="GO" id="GO:0005525">
    <property type="term" value="F:GTP binding"/>
    <property type="evidence" value="ECO:0007669"/>
    <property type="project" value="UniProtKB-UniRule"/>
</dbReference>
<dbReference type="GO" id="GO:0046872">
    <property type="term" value="F:metal ion binding"/>
    <property type="evidence" value="ECO:0007669"/>
    <property type="project" value="UniProtKB-KW"/>
</dbReference>
<dbReference type="GO" id="GO:0000917">
    <property type="term" value="P:division septum assembly"/>
    <property type="evidence" value="ECO:0007669"/>
    <property type="project" value="UniProtKB-KW"/>
</dbReference>
<dbReference type="CDD" id="cd01876">
    <property type="entry name" value="YihA_EngB"/>
    <property type="match status" value="1"/>
</dbReference>
<dbReference type="FunFam" id="3.40.50.300:FF:000098">
    <property type="entry name" value="Probable GTP-binding protein EngB"/>
    <property type="match status" value="1"/>
</dbReference>
<dbReference type="Gene3D" id="3.40.50.300">
    <property type="entry name" value="P-loop containing nucleotide triphosphate hydrolases"/>
    <property type="match status" value="1"/>
</dbReference>
<dbReference type="HAMAP" id="MF_00321">
    <property type="entry name" value="GTPase_EngB"/>
    <property type="match status" value="1"/>
</dbReference>
<dbReference type="InterPro" id="IPR030393">
    <property type="entry name" value="G_ENGB_dom"/>
</dbReference>
<dbReference type="InterPro" id="IPR006073">
    <property type="entry name" value="GTP-bd"/>
</dbReference>
<dbReference type="InterPro" id="IPR019987">
    <property type="entry name" value="GTP-bd_ribosome_bio_YsxC"/>
</dbReference>
<dbReference type="InterPro" id="IPR027417">
    <property type="entry name" value="P-loop_NTPase"/>
</dbReference>
<dbReference type="NCBIfam" id="TIGR03598">
    <property type="entry name" value="GTPase_YsxC"/>
    <property type="match status" value="1"/>
</dbReference>
<dbReference type="PANTHER" id="PTHR11649:SF13">
    <property type="entry name" value="ENGB-TYPE G DOMAIN-CONTAINING PROTEIN"/>
    <property type="match status" value="1"/>
</dbReference>
<dbReference type="PANTHER" id="PTHR11649">
    <property type="entry name" value="MSS1/TRME-RELATED GTP-BINDING PROTEIN"/>
    <property type="match status" value="1"/>
</dbReference>
<dbReference type="Pfam" id="PF01926">
    <property type="entry name" value="MMR_HSR1"/>
    <property type="match status" value="1"/>
</dbReference>
<dbReference type="SUPFAM" id="SSF52540">
    <property type="entry name" value="P-loop containing nucleoside triphosphate hydrolases"/>
    <property type="match status" value="1"/>
</dbReference>
<dbReference type="PROSITE" id="PS51706">
    <property type="entry name" value="G_ENGB"/>
    <property type="match status" value="1"/>
</dbReference>